<accession>Q5UPQ1</accession>
<reference key="1">
    <citation type="journal article" date="2004" name="Science">
        <title>The 1.2-megabase genome sequence of Mimivirus.</title>
        <authorList>
            <person name="Raoult D."/>
            <person name="Audic S."/>
            <person name="Robert C."/>
            <person name="Abergel C."/>
            <person name="Renesto P."/>
            <person name="Ogata H."/>
            <person name="La Scola B."/>
            <person name="Susan M."/>
            <person name="Claverie J.-M."/>
        </authorList>
    </citation>
    <scope>NUCLEOTIDE SEQUENCE [LARGE SCALE GENOMIC DNA]</scope>
    <source>
        <strain>Rowbotham-Bradford</strain>
    </source>
</reference>
<name>YR762_MIMIV</name>
<feature type="chain" id="PRO_0000251128" description="Uncharacterized protein R762">
    <location>
        <begin position="1"/>
        <end position="251"/>
    </location>
</feature>
<feature type="region of interest" description="Disordered" evidence="1">
    <location>
        <begin position="229"/>
        <end position="251"/>
    </location>
</feature>
<feature type="compositionally biased region" description="Basic and acidic residues" evidence="1">
    <location>
        <begin position="234"/>
        <end position="245"/>
    </location>
</feature>
<keyword id="KW-1185">Reference proteome</keyword>
<organismHost>
    <name type="scientific">Acanthamoeba polyphaga</name>
    <name type="common">Amoeba</name>
    <dbReference type="NCBI Taxonomy" id="5757"/>
</organismHost>
<gene>
    <name type="ordered locus">MIMI_R762</name>
</gene>
<protein>
    <recommendedName>
        <fullName>Uncharacterized protein R762</fullName>
    </recommendedName>
</protein>
<proteinExistence type="predicted"/>
<evidence type="ECO:0000256" key="1">
    <source>
        <dbReference type="SAM" id="MobiDB-lite"/>
    </source>
</evidence>
<organism>
    <name type="scientific">Acanthamoeba polyphaga mimivirus</name>
    <name type="common">APMV</name>
    <dbReference type="NCBI Taxonomy" id="212035"/>
    <lineage>
        <taxon>Viruses</taxon>
        <taxon>Varidnaviria</taxon>
        <taxon>Bamfordvirae</taxon>
        <taxon>Nucleocytoviricota</taxon>
        <taxon>Megaviricetes</taxon>
        <taxon>Imitervirales</taxon>
        <taxon>Mimiviridae</taxon>
        <taxon>Megamimivirinae</taxon>
        <taxon>Mimivirus</taxon>
        <taxon>Mimivirus bradfordmassiliense</taxon>
    </lineage>
</organism>
<dbReference type="EMBL" id="AY653733">
    <property type="protein sequence ID" value="AAV51022.1"/>
    <property type="molecule type" value="Genomic_DNA"/>
</dbReference>
<dbReference type="KEGG" id="vg:9925420"/>
<dbReference type="OrthoDB" id="14392at10239"/>
<dbReference type="Proteomes" id="UP000001134">
    <property type="component" value="Genome"/>
</dbReference>
<sequence>MTDYFTPENKLPGSREYLSPSGRFKLTVENYKTGKGCWNYTKGIVTNVDNGEIISEIKRNYSVFTHNFFIKNQSEWLFCGRTYMSQCFINLETGEEFDNSDKINKESLCWANVMANPSGTILAVEACIWGGPYVLDFYDFSDPSKGWSHIPYHNYDDDYDLTLFRTYELKWLSDSEFQYQNNREIHEKSGKEIYDMDLDEITSTKNDNFIEVLYYKVILSKVGSNMEFTSTETSPEHQADLKDDNSDISST</sequence>